<evidence type="ECO:0000255" key="1"/>
<evidence type="ECO:0000269" key="2">
    <source>
    </source>
</evidence>
<evidence type="ECO:0000269" key="3">
    <source>
    </source>
</evidence>
<evidence type="ECO:0000305" key="4"/>
<feature type="chain" id="PRO_0000082360" description="Taste receptor type 2 member 105">
    <location>
        <begin position="1"/>
        <end position="309"/>
    </location>
</feature>
<feature type="topological domain" description="Extracellular" evidence="1">
    <location>
        <begin position="1"/>
        <end position="9"/>
    </location>
</feature>
<feature type="transmembrane region" description="Helical; Name=1" evidence="1">
    <location>
        <begin position="10"/>
        <end position="32"/>
    </location>
</feature>
<feature type="topological domain" description="Cytoplasmic" evidence="1">
    <location>
        <begin position="33"/>
        <end position="44"/>
    </location>
</feature>
<feature type="transmembrane region" description="Helical; Name=2" evidence="1">
    <location>
        <begin position="45"/>
        <end position="67"/>
    </location>
</feature>
<feature type="topological domain" description="Extracellular" evidence="1">
    <location>
        <begin position="68"/>
        <end position="86"/>
    </location>
</feature>
<feature type="transmembrane region" description="Helical; Name=3" evidence="1">
    <location>
        <begin position="87"/>
        <end position="109"/>
    </location>
</feature>
<feature type="topological domain" description="Cytoplasmic" evidence="1">
    <location>
        <begin position="110"/>
        <end position="129"/>
    </location>
</feature>
<feature type="transmembrane region" description="Helical; Name=4" evidence="1">
    <location>
        <begin position="130"/>
        <end position="149"/>
    </location>
</feature>
<feature type="topological domain" description="Extracellular" evidence="1">
    <location>
        <begin position="150"/>
        <end position="177"/>
    </location>
</feature>
<feature type="transmembrane region" description="Helical; Name=5" evidence="1">
    <location>
        <begin position="178"/>
        <end position="200"/>
    </location>
</feature>
<feature type="topological domain" description="Cytoplasmic" evidence="1">
    <location>
        <begin position="201"/>
        <end position="226"/>
    </location>
</feature>
<feature type="transmembrane region" description="Helical; Name=6" evidence="1">
    <location>
        <begin position="227"/>
        <end position="249"/>
    </location>
</feature>
<feature type="topological domain" description="Extracellular" evidence="1">
    <location>
        <begin position="250"/>
        <end position="258"/>
    </location>
</feature>
<feature type="transmembrane region" description="Helical; Name=7" evidence="1">
    <location>
        <begin position="259"/>
        <end position="281"/>
    </location>
</feature>
<feature type="topological domain" description="Cytoplasmic" evidence="1">
    <location>
        <begin position="282"/>
        <end position="309"/>
    </location>
</feature>
<feature type="glycosylation site" description="N-linked (GlcNAc...) asparagine" evidence="1">
    <location>
        <position position="161"/>
    </location>
</feature>
<protein>
    <recommendedName>
        <fullName>Taste receptor type 2 member 105</fullName>
        <shortName>T2R105</shortName>
    </recommendedName>
    <alternativeName>
        <fullName>Taste receptor type 2 member 9</fullName>
        <shortName>T2R9</shortName>
    </alternativeName>
</protein>
<keyword id="KW-0297">G-protein coupled receptor</keyword>
<keyword id="KW-0325">Glycoprotein</keyword>
<keyword id="KW-0472">Membrane</keyword>
<keyword id="KW-0675">Receptor</keyword>
<keyword id="KW-1185">Reference proteome</keyword>
<keyword id="KW-0716">Sensory transduction</keyword>
<keyword id="KW-0919">Taste</keyword>
<keyword id="KW-0807">Transducer</keyword>
<keyword id="KW-0812">Transmembrane</keyword>
<keyword id="KW-1133">Transmembrane helix</keyword>
<dbReference type="EMBL" id="AF227146">
    <property type="protein sequence ID" value="AAF43919.1"/>
    <property type="molecule type" value="mRNA"/>
</dbReference>
<dbReference type="RefSeq" id="NP_076489.1">
    <property type="nucleotide sequence ID" value="NM_023999.1"/>
</dbReference>
<dbReference type="SMR" id="Q9JKT5"/>
<dbReference type="FunCoup" id="Q9JKT5">
    <property type="interactions" value="80"/>
</dbReference>
<dbReference type="STRING" id="10116.ENSRNOP00000007481"/>
<dbReference type="GlyCosmos" id="Q9JKT5">
    <property type="glycosylation" value="1 site, No reported glycans"/>
</dbReference>
<dbReference type="GlyGen" id="Q9JKT5">
    <property type="glycosylation" value="1 site"/>
</dbReference>
<dbReference type="PaxDb" id="10116-ENSRNOP00000007481"/>
<dbReference type="Ensembl" id="ENSRNOT00000007481.3">
    <property type="protein sequence ID" value="ENSRNOP00000007481.1"/>
    <property type="gene ID" value="ENSRNOG00000005664.3"/>
</dbReference>
<dbReference type="GeneID" id="78985"/>
<dbReference type="KEGG" id="rno:78985"/>
<dbReference type="UCSC" id="RGD:620741">
    <property type="organism name" value="rat"/>
</dbReference>
<dbReference type="AGR" id="RGD:620741"/>
<dbReference type="CTD" id="57252"/>
<dbReference type="RGD" id="620741">
    <property type="gene designation" value="Tas2r105"/>
</dbReference>
<dbReference type="eggNOG" id="ENOG502T3AX">
    <property type="taxonomic scope" value="Eukaryota"/>
</dbReference>
<dbReference type="GeneTree" id="ENSGT01100000263477"/>
<dbReference type="HOGENOM" id="CLU_072337_3_0_1"/>
<dbReference type="InParanoid" id="Q9JKT5"/>
<dbReference type="OMA" id="SRIFIVW"/>
<dbReference type="OrthoDB" id="8876749at2759"/>
<dbReference type="PhylomeDB" id="Q9JKT5"/>
<dbReference type="TreeFam" id="TF335891"/>
<dbReference type="PRO" id="PR:Q9JKT5"/>
<dbReference type="Proteomes" id="UP000002494">
    <property type="component" value="Chromosome 4"/>
</dbReference>
<dbReference type="GO" id="GO:0016020">
    <property type="term" value="C:membrane"/>
    <property type="evidence" value="ECO:0000318"/>
    <property type="project" value="GO_Central"/>
</dbReference>
<dbReference type="GO" id="GO:0033038">
    <property type="term" value="F:bitter taste receptor activity"/>
    <property type="evidence" value="ECO:0007669"/>
    <property type="project" value="InterPro"/>
</dbReference>
<dbReference type="GO" id="GO:0004930">
    <property type="term" value="F:G protein-coupled receptor activity"/>
    <property type="evidence" value="ECO:0007669"/>
    <property type="project" value="UniProtKB-KW"/>
</dbReference>
<dbReference type="GO" id="GO:0008527">
    <property type="term" value="F:taste receptor activity"/>
    <property type="evidence" value="ECO:0000304"/>
    <property type="project" value="UniProtKB"/>
</dbReference>
<dbReference type="CDD" id="cd15021">
    <property type="entry name" value="7tm_TAS2R10"/>
    <property type="match status" value="1"/>
</dbReference>
<dbReference type="FunFam" id="1.20.1070.10:FF:000042">
    <property type="entry name" value="Taste receptor type 2 member 7"/>
    <property type="match status" value="1"/>
</dbReference>
<dbReference type="Gene3D" id="1.20.1070.10">
    <property type="entry name" value="Rhodopsin 7-helix transmembrane proteins"/>
    <property type="match status" value="1"/>
</dbReference>
<dbReference type="InterPro" id="IPR007960">
    <property type="entry name" value="TAS2R"/>
</dbReference>
<dbReference type="PANTHER" id="PTHR11394">
    <property type="entry name" value="TASTE RECEPTOR TYPE 2"/>
    <property type="match status" value="1"/>
</dbReference>
<dbReference type="PANTHER" id="PTHR11394:SF132">
    <property type="entry name" value="TASTE RECEPTOR TYPE 2 MEMBER 105"/>
    <property type="match status" value="1"/>
</dbReference>
<dbReference type="Pfam" id="PF05296">
    <property type="entry name" value="TAS2R"/>
    <property type="match status" value="1"/>
</dbReference>
<dbReference type="SUPFAM" id="SSF81321">
    <property type="entry name" value="Family A G protein-coupled receptor-like"/>
    <property type="match status" value="1"/>
</dbReference>
<comment type="function">
    <text evidence="3">Gustducin-coupled cycloheximide receptor implicated in the perception of bitter compounds in the oral cavity and the gastrointestinal tract. Signals through PLCB2 and the calcium-regulated cation channel TRPM5.</text>
</comment>
<comment type="subcellular location">
    <subcellularLocation>
        <location>Membrane</location>
        <topology>Multi-pass membrane protein</topology>
    </subcellularLocation>
</comment>
<comment type="tissue specificity">
    <text evidence="2">Expressed in subsets of taste receptor cells of the tongue and palate epithelium and exclusively in gustducin-positive cells. Expressed in 15% taste bud cells in circumvallate and foliate papillae but only in 2% in fungiform papillae. Expressed in the duodenum, antrum and fundus (part of the stomach).</text>
</comment>
<comment type="miscellaneous">
    <text>Several bitter taste receptors are expressed in a single taste receptor cell.</text>
</comment>
<comment type="similarity">
    <text evidence="4">Belongs to the G-protein coupled receptor T2R family.</text>
</comment>
<proteinExistence type="evidence at protein level"/>
<gene>
    <name type="primary">Tas2r105</name>
    <name type="synonym">Tas2r9</name>
</gene>
<organism>
    <name type="scientific">Rattus norvegicus</name>
    <name type="common">Rat</name>
    <dbReference type="NCBI Taxonomy" id="10116"/>
    <lineage>
        <taxon>Eukaryota</taxon>
        <taxon>Metazoa</taxon>
        <taxon>Chordata</taxon>
        <taxon>Craniata</taxon>
        <taxon>Vertebrata</taxon>
        <taxon>Euteleostomi</taxon>
        <taxon>Mammalia</taxon>
        <taxon>Eutheria</taxon>
        <taxon>Euarchontoglires</taxon>
        <taxon>Glires</taxon>
        <taxon>Rodentia</taxon>
        <taxon>Myomorpha</taxon>
        <taxon>Muroidea</taxon>
        <taxon>Muridae</taxon>
        <taxon>Murinae</taxon>
        <taxon>Rattus</taxon>
    </lineage>
</organism>
<accession>Q9JKT5</accession>
<sequence>MLSAAEGILLSIATVEAGLGVLGNTFIALVNCMDWAKNKKLSKIGFLLFGLATSRIFIVWILILDAYAKLFFPGKYLSKSLTEIISCIWMTVNHMTVWFATSLSIFYFLKIANFSHYIFLWLKRRTDKVFAFLLWCLLISWAISFSFTVKVMKSNPKNHGNRTSGTHWEKREFTSNYVLINIGVISLLIMTLTACFLLIISLWKHSRQMQSNVSGFRDLNTEAHVKAIKFLISFIILFILYFIGVAVEIICMFIPENKLLFIFGLTTASVYPCCHSVILILTNSQLKQAFVKVLEGLKFSENGKDLRAT</sequence>
<reference key="1">
    <citation type="journal article" date="2000" name="Cell">
        <title>A novel family of mammalian taste receptors.</title>
        <authorList>
            <person name="Adler E."/>
            <person name="Hoon M.A."/>
            <person name="Mueller K.L."/>
            <person name="Chandrashekar J."/>
            <person name="Ryba N.J.P."/>
            <person name="Zuker C.S."/>
        </authorList>
    </citation>
    <scope>NUCLEOTIDE SEQUENCE [MRNA]</scope>
    <scope>TOPOLOGY</scope>
</reference>
<reference key="2">
    <citation type="journal article" date="2000" name="Cell">
        <title>T2Rs function as bitter taste receptors.</title>
        <authorList>
            <person name="Chandrashekar J."/>
            <person name="Mueller K.L."/>
            <person name="Hoon M.A."/>
            <person name="Adler E."/>
            <person name="Feng L."/>
            <person name="Guo W."/>
            <person name="Zuker C.S."/>
            <person name="Ryba N.J.P."/>
        </authorList>
    </citation>
    <scope>CHARACTERIZATION</scope>
</reference>
<reference key="3">
    <citation type="journal article" date="2002" name="Nat. Genet.">
        <title>The human TAS2R16 receptor mediates bitter taste in response to beta-glucopyranosides.</title>
        <authorList>
            <person name="Bufe B."/>
            <person name="Hofmann T."/>
            <person name="Krautwurst D."/>
            <person name="Raguse J.-D."/>
            <person name="Meyerhof W."/>
        </authorList>
    </citation>
    <scope>FUNCTION</scope>
</reference>
<reference key="4">
    <citation type="journal article" date="2002" name="Proc. Natl. Acad. Sci. U.S.A.">
        <title>Expression of bitter taste receptors of the T2R family in the gastrointestinal tract and enteroendocrine STC-1 cells.</title>
        <authorList>
            <person name="Wu S.V."/>
            <person name="Rozengurt N."/>
            <person name="Yang M."/>
            <person name="Young S.H."/>
            <person name="Sinnett-Smith J."/>
            <person name="Rozengurt E."/>
        </authorList>
    </citation>
    <scope>TISSUE SPECIFICITY</scope>
</reference>
<reference key="5">
    <citation type="journal article" date="2002" name="Curr. Opin. Neurobiol.">
        <title>Receptors for bitter and sweet taste.</title>
        <authorList>
            <person name="Montmayeur J.-P."/>
            <person name="Matsunami H."/>
        </authorList>
    </citation>
    <scope>REVIEW</scope>
</reference>
<reference key="6">
    <citation type="journal article" date="2002" name="J. Biol. Chem.">
        <title>Molecular mechanisms of bitter and sweet taste transduction.</title>
        <authorList>
            <person name="Margolskee R.F."/>
        </authorList>
    </citation>
    <scope>REVIEW</scope>
</reference>
<reference key="7">
    <citation type="journal article" date="2003" name="Cell">
        <title>Coding of sweet, bitter, and umami tastes: different receptor cells sharing similar signaling pathways.</title>
        <authorList>
            <person name="Zhang Y."/>
            <person name="Hoon M.A."/>
            <person name="Chandrashekar J."/>
            <person name="Mueller K.L."/>
            <person name="Cook B."/>
            <person name="Wu D."/>
            <person name="Zuker C.S."/>
            <person name="Ryba N.J."/>
        </authorList>
    </citation>
    <scope>REVIEW</scope>
</reference>
<name>TR105_RAT</name>